<proteinExistence type="uncertain"/>
<comment type="caution">
    <text evidence="2">Product of a dubious gene prediction unlikely to encode a functional protein. Because of that it is not part of the S.cerevisiae S288c complete/reference proteome set.</text>
</comment>
<comment type="sequence caution" evidence="1">
    <conflict type="erroneous initiation">
        <sequence resource="EMBL-CDS" id="AAS56471"/>
    </conflict>
</comment>
<reference key="1">
    <citation type="journal article" date="1992" name="Nature">
        <title>The complete DNA sequence of yeast chromosome III.</title>
        <authorList>
            <person name="Oliver S.G."/>
            <person name="van der Aart Q.J.M."/>
            <person name="Agostoni-Carbone M.L."/>
            <person name="Aigle M."/>
            <person name="Alberghina L."/>
            <person name="Alexandraki D."/>
            <person name="Antoine G."/>
            <person name="Anwar R."/>
            <person name="Ballesta J.P.G."/>
            <person name="Benit P."/>
            <person name="Berben G."/>
            <person name="Bergantino E."/>
            <person name="Biteau N."/>
            <person name="Bolle P.-A."/>
            <person name="Bolotin-Fukuhara M."/>
            <person name="Brown A."/>
            <person name="Brown A.J.P."/>
            <person name="Buhler J.-M."/>
            <person name="Carcano C."/>
            <person name="Carignani G."/>
            <person name="Cederberg H."/>
            <person name="Chanet R."/>
            <person name="Contreras R."/>
            <person name="Crouzet M."/>
            <person name="Daignan-Fornier B."/>
            <person name="Defoor E."/>
            <person name="Delgado M.D."/>
            <person name="Demolder J."/>
            <person name="Doira C."/>
            <person name="Dubois E."/>
            <person name="Dujon B."/>
            <person name="Duesterhoeft A."/>
            <person name="Erdmann D."/>
            <person name="Esteban M."/>
            <person name="Fabre F."/>
            <person name="Fairhead C."/>
            <person name="Faye G."/>
            <person name="Feldmann H."/>
            <person name="Fiers W."/>
            <person name="Francingues-Gaillard M.-C."/>
            <person name="Franco L."/>
            <person name="Frontali L."/>
            <person name="Fukuhara H."/>
            <person name="Fuller L.J."/>
            <person name="Galland P."/>
            <person name="Gent M.E."/>
            <person name="Gigot D."/>
            <person name="Gilliquet V."/>
            <person name="Glansdorff N."/>
            <person name="Goffeau A."/>
            <person name="Grenson M."/>
            <person name="Grisanti P."/>
            <person name="Grivell L.A."/>
            <person name="de Haan M."/>
            <person name="Haasemann M."/>
            <person name="Hatat D."/>
            <person name="Hoenicka J."/>
            <person name="Hegemann J.H."/>
            <person name="Herbert C.J."/>
            <person name="Hilger F."/>
            <person name="Hohmann S."/>
            <person name="Hollenberg C.P."/>
            <person name="Huse K."/>
            <person name="Iborra F."/>
            <person name="Indge K.J."/>
            <person name="Isono K."/>
            <person name="Jacq C."/>
            <person name="Jacquet M."/>
            <person name="James C.M."/>
            <person name="Jauniaux J.-C."/>
            <person name="Jia Y."/>
            <person name="Jimenez A."/>
            <person name="Kelly A."/>
            <person name="Kleinhans U."/>
            <person name="Kreisl P."/>
            <person name="Lanfranchi G."/>
            <person name="Lewis C."/>
            <person name="van der Linden C.G."/>
            <person name="Lucchini G."/>
            <person name="Lutzenkirchen K."/>
            <person name="Maat M.J."/>
            <person name="Mallet L."/>
            <person name="Mannhaupt G."/>
            <person name="Martegani E."/>
            <person name="Mathieu A."/>
            <person name="Maurer C.T.C."/>
            <person name="McConnell D."/>
            <person name="McKee R.A."/>
            <person name="Messenguy F."/>
            <person name="Mewes H.-W."/>
            <person name="Molemans F."/>
            <person name="Montague M.A."/>
            <person name="Muzi Falconi M."/>
            <person name="Navas L."/>
            <person name="Newlon C.S."/>
            <person name="Noone D."/>
            <person name="Pallier C."/>
            <person name="Panzeri L."/>
            <person name="Pearson B.M."/>
            <person name="Perea J."/>
            <person name="Philippsen P."/>
            <person name="Pierard A."/>
            <person name="Planta R.J."/>
            <person name="Plevani P."/>
            <person name="Poetsch B."/>
            <person name="Pohl F.M."/>
            <person name="Purnelle B."/>
            <person name="Ramezani Rad M."/>
            <person name="Rasmussen S.W."/>
            <person name="Raynal A."/>
            <person name="Remacha M.A."/>
            <person name="Richterich P."/>
            <person name="Roberts A.B."/>
            <person name="Rodriguez F."/>
            <person name="Sanz E."/>
            <person name="Schaaff-Gerstenschlaeger I."/>
            <person name="Scherens B."/>
            <person name="Schweitzer B."/>
            <person name="Shu Y."/>
            <person name="Skala J."/>
            <person name="Slonimski P.P."/>
            <person name="Sor F."/>
            <person name="Soustelle C."/>
            <person name="Spiegelberg R."/>
            <person name="Stateva L.I."/>
            <person name="Steensma H.Y."/>
            <person name="Steiner S."/>
            <person name="Thierry A."/>
            <person name="Thireos G."/>
            <person name="Tzermia M."/>
            <person name="Urrestarazu L.A."/>
            <person name="Valle G."/>
            <person name="Vetter I."/>
            <person name="van Vliet-Reedijk J.C."/>
            <person name="Voet M."/>
            <person name="Volckaert G."/>
            <person name="Vreken P."/>
            <person name="Wang H."/>
            <person name="Warmington J.R."/>
            <person name="von Wettstein D."/>
            <person name="Wicksteed B.L."/>
            <person name="Wilson C."/>
            <person name="Wurst H."/>
            <person name="Xu G."/>
            <person name="Yoshikawa A."/>
            <person name="Zimmermann F.K."/>
            <person name="Sgouros J.G."/>
        </authorList>
    </citation>
    <scope>NUCLEOTIDE SEQUENCE [LARGE SCALE GENOMIC DNA]</scope>
    <source>
        <strain>ATCC 204508 / S288c</strain>
    </source>
</reference>
<reference key="2">
    <citation type="journal article" date="2014" name="G3 (Bethesda)">
        <title>The reference genome sequence of Saccharomyces cerevisiae: Then and now.</title>
        <authorList>
            <person name="Engel S.R."/>
            <person name="Dietrich F.S."/>
            <person name="Fisk D.G."/>
            <person name="Binkley G."/>
            <person name="Balakrishnan R."/>
            <person name="Costanzo M.C."/>
            <person name="Dwight S.S."/>
            <person name="Hitz B.C."/>
            <person name="Karra K."/>
            <person name="Nash R.S."/>
            <person name="Weng S."/>
            <person name="Wong E.D."/>
            <person name="Lloyd P."/>
            <person name="Skrzypek M.S."/>
            <person name="Miyasato S.R."/>
            <person name="Simison M."/>
            <person name="Cherry J.M."/>
        </authorList>
    </citation>
    <scope>GENOME REANNOTATION</scope>
    <source>
        <strain>ATCC 204508 / S288c</strain>
    </source>
</reference>
<reference key="3">
    <citation type="submission" date="2001-06" db="EMBL/GenBank/DDBJ databases">
        <authorList>
            <person name="Valles G."/>
            <person name="Volckaerts G."/>
        </authorList>
    </citation>
    <scope>SEQUENCE REVISION TO N-TERMINUS</scope>
</reference>
<reference key="4">
    <citation type="journal article" date="2007" name="Genome Res.">
        <title>Approaching a complete repository of sequence-verified protein-encoding clones for Saccharomyces cerevisiae.</title>
        <authorList>
            <person name="Hu Y."/>
            <person name="Rolfs A."/>
            <person name="Bhullar B."/>
            <person name="Murthy T.V.S."/>
            <person name="Zhu C."/>
            <person name="Berger M.F."/>
            <person name="Camargo A.A."/>
            <person name="Kelley F."/>
            <person name="McCarron S."/>
            <person name="Jepson D."/>
            <person name="Richardson A."/>
            <person name="Raphael J."/>
            <person name="Moreira D."/>
            <person name="Taycher E."/>
            <person name="Zuo D."/>
            <person name="Mohr S."/>
            <person name="Kane M.F."/>
            <person name="Williamson J."/>
            <person name="Simpson A.J.G."/>
            <person name="Bulyk M.L."/>
            <person name="Harlow E."/>
            <person name="Marsischky G."/>
            <person name="Kolodner R.D."/>
            <person name="LaBaer J."/>
        </authorList>
    </citation>
    <scope>NUCLEOTIDE SEQUENCE [GENOMIC DNA] OF 52-247</scope>
    <source>
        <strain>ATCC 204508 / S288c</strain>
    </source>
</reference>
<dbReference type="EMBL" id="X59720">
    <property type="status" value="NOT_ANNOTATED_CDS"/>
    <property type="molecule type" value="Genomic_DNA"/>
</dbReference>
<dbReference type="EMBL" id="AY558145">
    <property type="protein sequence ID" value="AAS56471.1"/>
    <property type="status" value="ALT_INIT"/>
    <property type="molecule type" value="Genomic_DNA"/>
</dbReference>
<dbReference type="PIR" id="S19408">
    <property type="entry name" value="S19408"/>
</dbReference>
<dbReference type="DIP" id="DIP-4983N"/>
<dbReference type="IntAct" id="P25602">
    <property type="interactions" value="1"/>
</dbReference>
<dbReference type="STRING" id="4932.YCL076W"/>
<dbReference type="PaxDb" id="4932-YCL076W"/>
<dbReference type="EnsemblFungi" id="YCL076W_mRNA">
    <property type="protein sequence ID" value="YCL076W"/>
    <property type="gene ID" value="YCL076W"/>
</dbReference>
<dbReference type="AGR" id="SGD:S000000581"/>
<dbReference type="SGD" id="S000000581">
    <property type="gene designation" value="YCL076W"/>
</dbReference>
<dbReference type="HOGENOM" id="CLU_103876_0_0_1"/>
<dbReference type="OMA" id="CEMNWIC"/>
<dbReference type="InterPro" id="IPR035179">
    <property type="entry name" value="DUF5314"/>
</dbReference>
<dbReference type="Pfam" id="PF17241">
    <property type="entry name" value="Retrotran_gag_4"/>
    <property type="match status" value="1"/>
</dbReference>
<evidence type="ECO:0000305" key="1"/>
<evidence type="ECO:0000305" key="2">
    <source>
    </source>
</evidence>
<feature type="chain" id="PRO_0000202558" description="Putative uncharacterized protein YCL076W">
    <location>
        <begin position="1"/>
        <end position="247"/>
    </location>
</feature>
<name>YCH6_YEAST</name>
<accession>P25602</accession>
<organism>
    <name type="scientific">Saccharomyces cerevisiae (strain ATCC 204508 / S288c)</name>
    <name type="common">Baker's yeast</name>
    <dbReference type="NCBI Taxonomy" id="559292"/>
    <lineage>
        <taxon>Eukaryota</taxon>
        <taxon>Fungi</taxon>
        <taxon>Dikarya</taxon>
        <taxon>Ascomycota</taxon>
        <taxon>Saccharomycotina</taxon>
        <taxon>Saccharomycetes</taxon>
        <taxon>Saccharomycetales</taxon>
        <taxon>Saccharomycetaceae</taxon>
        <taxon>Saccharomyces</taxon>
    </lineage>
</organism>
<sequence>MTYKLDRNSLRQQVMSPQSNASENIINLSSPNNYKQWLYGIETAAEYANEYMNEFVHTGDIQSMKRDYNLSANDESFVKTVFNSFLVKLYKKTIVGEAACEMNWICDDSLGRVSAYDIFSHFEENYNEVTIGSRLTLIEDLPNISSKPVDEIASFLKTLFTMLEDNSEEQDKKKRRDTNIALLLMTFLPELKESFHEKFGDSKALQLSQVIRFCKLNASSNSSSSVSDALVAQDRRNYQKKGNKGCI</sequence>
<gene>
    <name type="ordered locus">YCL076W</name>
    <name type="ORF">YCL76W</name>
</gene>
<protein>
    <recommendedName>
        <fullName>Putative uncharacterized protein YCL076W</fullName>
    </recommendedName>
</protein>